<sequence>MSLSTHYHAHKPNVPIIMEDVFGWVREGNAFQVRVWLDDHEHDLNVGDDHAFSLLHWAAKGGHVAIAEMLLSRGARVNSTNMGDDTSLHLAAAHGHRQIVVKLLSRKADVNATNEHGMTPLHYACFWGYEQIAEDLISCGAAVNVCNKKGMTPLDVCQPMCKNTILEIAQEHGQSPNDRVPFKDTTWKGTKSRTRDATLSRYTGVDVSSLNLITKIAESHSGELWRGKWQGNDIVARILNVQEVTARISRDFQTEFPALRIFAHPNICAVLAAANQPPNLVIISQYMPFGSLYNVLHEQSSVVIDHGQAVRFALDIARGMSYLHSLDPMLLRFYLSSKHVVVDEELTAKLSMADTKFSFQEVGKAYSPAWMSPEALSRAPEDLNIRAADMWSFAILLWELNTREVPFSDLPPMECGMKIALEGLRVHIPPGIARNMNRLMNICMNEDPGRRPNFDQIIPILERMIL</sequence>
<accession>Q9TZC4</accession>
<accession>Q9NG00</accession>
<keyword id="KW-0040">ANK repeat</keyword>
<keyword id="KW-0130">Cell adhesion</keyword>
<keyword id="KW-1003">Cell membrane</keyword>
<keyword id="KW-0963">Cytoplasm</keyword>
<keyword id="KW-0472">Membrane</keyword>
<keyword id="KW-1185">Reference proteome</keyword>
<keyword id="KW-0677">Repeat</keyword>
<comment type="function">
    <text evidence="3 5 6 8 10 11">Probable pseudokinase that acts as an adapter protein (PubMed:12015115, PubMed:23283987). Component of an integrin containing attachment complex, which is required for muscle development and maintenance (PubMed:22253611). Involved in the assembly of dense bodies and M lines during body wall muscle development by recruiting several of their components including integrin pat-3, cpna-1, unc-89 and unc-112 to integrin-mediated attachment sites (PubMed:12015115, PubMed:23283987). Plays a role in distal tip cell (DTC) migration and in oocyte development probably by regulating the actin cytoskeleton (PubMed:16476426). During the formation of neuromuscular junctions at the larval stage, negatively regulates membrane protrusion from body wall muscles (PubMed:16495308). May be involved in thermotolerance and lifespan (PubMed:24314125).</text>
</comment>
<comment type="subunit">
    <text evidence="3 4 7 12 16">Interacts (via protein kinase domain) with unc-112 (via N-terminus) (PubMed:12015115, PubMed:24692564). Interacts (via ANK repeats) with unc-97 (via first LIM domain) (PubMed:12015115, PubMed:17662976). Interacts (via protein kinase domain) with pat-6 (via C-terminus CH domain) (PubMed:12781130). May form a complex with unc-112, unc-97 and pat-6 (PubMed:12781130, PubMed:17662976, PubMed:24692564). Does not interact with integrin pat-3 (PubMed:12015115). Component of an integrin containing attachment complex, composed of at least pat-2, pat-3, pat-4, pat-6, unc-52, unc-97 and unc-112 (PubMed:22253611).</text>
</comment>
<comment type="interaction">
    <interactant intactId="EBI-1564527">
        <id>Q9TZC4</id>
    </interactant>
    <interactant intactId="EBI-328106">
        <id>O16785</id>
        <label>pat-6</label>
    </interactant>
    <organismsDiffer>false</organismsDiffer>
    <experiments>4</experiments>
</comment>
<comment type="interaction">
    <interactant intactId="EBI-1564527">
        <id>Q9TZC4</id>
    </interactant>
    <interactant intactId="EBI-1564809">
        <id>Q18685</id>
        <label>unc-112</label>
    </interactant>
    <organismsDiffer>false</organismsDiffer>
    <experiments>5</experiments>
</comment>
<comment type="subcellular location">
    <subcellularLocation>
        <location evidence="3 10">Cytoplasm</location>
        <location evidence="3 10">Myofibril</location>
        <location evidence="3 10">Sarcomere</location>
        <location evidence="3 10">M line</location>
    </subcellularLocation>
    <subcellularLocation>
        <location evidence="3 7">Basal cell membrane</location>
        <topology evidence="3 11">Peripheral membrane protein</topology>
    </subcellularLocation>
    <text evidence="3 4 7">Colocalizes in dense bodies and M lines with integrin pat-3. Localization to muscle attachment sites is regulated by pat-2, unc-52 and unc-112 (PubMed:12015115). Co-localizes with pat-3 and pat-6 at body wall muscle attachment sites (PubMed:12781130, PubMed:17662976).</text>
</comment>
<comment type="tissue specificity">
    <text evidence="3 10">Expressed in body wall muscle.</text>
</comment>
<comment type="developmental stage">
    <text evidence="3 10">Expression starts in body wall muscles at the 1.5-fold embryonic stage.</text>
</comment>
<comment type="domain">
    <text evidence="2">The protein kinase domain is predicted to be catalytically inactive.</text>
</comment>
<comment type="disruption phenotype">
    <text evidence="3 5 6 8 9 11">Embryonic lethality due to 1.5 fold stage-onset paralysis. Mutant embryos have defects in maintaining polarization of several components involved in the assembly of dense bodies and M lines, such as integrin pat-3, unc-89 and unc-112 to muscle attachment sites (PubMed:12015115). RNAi-mediated knockdown causes sterility resulting from oocyte accumulation in the proximal gonad and distal tip cell (DTC) migration defects (33 percent of animals). Actin cytoskeleton in the proximal gonad appears disorganized (PubMed:16476426). RNAi-mediated knockdown results in impaired mobility, mitochondrial fragmentation and disrupted integrin attachment complexes in muscle (PubMed:22253611). This leads to degradation of muscle proteins in the cytosol, myofibrillar defects and disruption of sarcomere organization (PubMed:22253611). RNAi-mediated knockdown in hatched embryos but not in adults causes adult-onset paralysis characterized by the collapse of myosin filaments in body wall muscles and a decrease in pharyngeal pumping (PubMed:24314125). In L1 larval stage, results in the formation of large myosin aggregates in body wall muscle cells (PubMed:22761445). In L4 larval stage, causes ectopic membrane extensions from body wall muscles (PubMed:16495308). In adults, causes an increase in lifespan, resistance to heat stress and increased expression of stress response factors hsf-1, sod-3, hsp-16.2 and gst-4 (PubMed:24314125).</text>
</comment>
<comment type="similarity">
    <text evidence="15">Belongs to the protein kinase superfamily. TKL Ser/Thr protein kinase family.</text>
</comment>
<proteinExistence type="evidence at protein level"/>
<dbReference type="EMBL" id="BX284603">
    <property type="protein sequence ID" value="CCD66066.1"/>
    <property type="molecule type" value="Genomic_DNA"/>
</dbReference>
<dbReference type="EMBL" id="AJ249344">
    <property type="protein sequence ID" value="CAB77052.1"/>
    <property type="molecule type" value="mRNA"/>
</dbReference>
<dbReference type="PIR" id="T33574">
    <property type="entry name" value="T33574"/>
</dbReference>
<dbReference type="RefSeq" id="NP_497139.1">
    <property type="nucleotide sequence ID" value="NM_064738.8"/>
</dbReference>
<dbReference type="SMR" id="Q9TZC4"/>
<dbReference type="FunCoup" id="Q9TZC4">
    <property type="interactions" value="1674"/>
</dbReference>
<dbReference type="IntAct" id="Q9TZC4">
    <property type="interactions" value="4"/>
</dbReference>
<dbReference type="STRING" id="6239.C29F9.7.1"/>
<dbReference type="PaxDb" id="6239-C29F9.7"/>
<dbReference type="PeptideAtlas" id="Q9TZC4"/>
<dbReference type="EnsemblMetazoa" id="C29F9.7.1">
    <property type="protein sequence ID" value="C29F9.7.1"/>
    <property type="gene ID" value="WBGene00003931"/>
</dbReference>
<dbReference type="GeneID" id="175175"/>
<dbReference type="KEGG" id="cel:CELE_C29F9.7"/>
<dbReference type="UCSC" id="C29F9.7">
    <property type="organism name" value="c. elegans"/>
</dbReference>
<dbReference type="AGR" id="WB:WBGene00003931"/>
<dbReference type="CTD" id="175175"/>
<dbReference type="WormBase" id="C29F9.7">
    <property type="protein sequence ID" value="CE19706"/>
    <property type="gene ID" value="WBGene00003931"/>
    <property type="gene designation" value="pat-4"/>
</dbReference>
<dbReference type="eggNOG" id="KOG0195">
    <property type="taxonomic scope" value="Eukaryota"/>
</dbReference>
<dbReference type="GeneTree" id="ENSGT00940000155956"/>
<dbReference type="HOGENOM" id="CLU_000288_7_5_1"/>
<dbReference type="InParanoid" id="Q9TZC4"/>
<dbReference type="OMA" id="CREGNAM"/>
<dbReference type="OrthoDB" id="6718656at2759"/>
<dbReference type="PhylomeDB" id="Q9TZC4"/>
<dbReference type="Reactome" id="R-CEL-446343">
    <property type="pathway name" value="Localization of the PINCH-ILK-PARVIN complex to focal adhesions"/>
</dbReference>
<dbReference type="Reactome" id="R-CEL-446353">
    <property type="pathway name" value="Cell-extracellular matrix interactions"/>
</dbReference>
<dbReference type="PRO" id="PR:Q9TZC4"/>
<dbReference type="Proteomes" id="UP000001940">
    <property type="component" value="Chromosome III"/>
</dbReference>
<dbReference type="Bgee" id="WBGene00003931">
    <property type="expression patterns" value="Expressed in pharyngeal muscle cell (C elegans) and 4 other cell types or tissues"/>
</dbReference>
<dbReference type="GO" id="GO:0005912">
    <property type="term" value="C:adherens junction"/>
    <property type="evidence" value="ECO:0000314"/>
    <property type="project" value="WormBase"/>
</dbReference>
<dbReference type="GO" id="GO:0009925">
    <property type="term" value="C:basal plasma membrane"/>
    <property type="evidence" value="ECO:0000314"/>
    <property type="project" value="UniProtKB"/>
</dbReference>
<dbReference type="GO" id="GO:0005737">
    <property type="term" value="C:cytoplasm"/>
    <property type="evidence" value="ECO:0000318"/>
    <property type="project" value="GO_Central"/>
</dbReference>
<dbReference type="GO" id="GO:0005925">
    <property type="term" value="C:focal adhesion"/>
    <property type="evidence" value="ECO:0000318"/>
    <property type="project" value="GO_Central"/>
</dbReference>
<dbReference type="GO" id="GO:0008305">
    <property type="term" value="C:integrin complex"/>
    <property type="evidence" value="ECO:0000314"/>
    <property type="project" value="WormBase"/>
</dbReference>
<dbReference type="GO" id="GO:0031430">
    <property type="term" value="C:M band"/>
    <property type="evidence" value="ECO:0000314"/>
    <property type="project" value="UniProtKB"/>
</dbReference>
<dbReference type="GO" id="GO:0055120">
    <property type="term" value="C:striated muscle dense body"/>
    <property type="evidence" value="ECO:0000314"/>
    <property type="project" value="UniProtKB"/>
</dbReference>
<dbReference type="GO" id="GO:0005524">
    <property type="term" value="F:ATP binding"/>
    <property type="evidence" value="ECO:0007669"/>
    <property type="project" value="InterPro"/>
</dbReference>
<dbReference type="GO" id="GO:0005178">
    <property type="term" value="F:integrin binding"/>
    <property type="evidence" value="ECO:0000353"/>
    <property type="project" value="UniProtKB"/>
</dbReference>
<dbReference type="GO" id="GO:0004674">
    <property type="term" value="F:protein serine/threonine kinase activity"/>
    <property type="evidence" value="ECO:0000250"/>
    <property type="project" value="WormBase"/>
</dbReference>
<dbReference type="GO" id="GO:0030674">
    <property type="term" value="F:protein-macromolecule adaptor activity"/>
    <property type="evidence" value="ECO:0000314"/>
    <property type="project" value="UniProtKB"/>
</dbReference>
<dbReference type="GO" id="GO:0005102">
    <property type="term" value="F:signaling receptor binding"/>
    <property type="evidence" value="ECO:0000318"/>
    <property type="project" value="GO_Central"/>
</dbReference>
<dbReference type="GO" id="GO:0030154">
    <property type="term" value="P:cell differentiation"/>
    <property type="evidence" value="ECO:0000318"/>
    <property type="project" value="GO_Central"/>
</dbReference>
<dbReference type="GO" id="GO:0007160">
    <property type="term" value="P:cell-matrix adhesion"/>
    <property type="evidence" value="ECO:0000318"/>
    <property type="project" value="GO_Central"/>
</dbReference>
<dbReference type="GO" id="GO:0009792">
    <property type="term" value="P:embryo development ending in birth or egg hatching"/>
    <property type="evidence" value="ECO:0000315"/>
    <property type="project" value="WormBase"/>
</dbReference>
<dbReference type="GO" id="GO:0007229">
    <property type="term" value="P:integrin-mediated signaling pathway"/>
    <property type="evidence" value="ECO:0000316"/>
    <property type="project" value="WormBase"/>
</dbReference>
<dbReference type="GO" id="GO:0007005">
    <property type="term" value="P:mitochondrion organization"/>
    <property type="evidence" value="ECO:0000315"/>
    <property type="project" value="UniProtKB"/>
</dbReference>
<dbReference type="GO" id="GO:0046716">
    <property type="term" value="P:muscle cell cellular homeostasis"/>
    <property type="evidence" value="ECO:0000315"/>
    <property type="project" value="UniProtKB"/>
</dbReference>
<dbReference type="GO" id="GO:0030239">
    <property type="term" value="P:myofibril assembly"/>
    <property type="evidence" value="ECO:0000315"/>
    <property type="project" value="WormBase"/>
</dbReference>
<dbReference type="GO" id="GO:1904951">
    <property type="term" value="P:positive regulation of establishment of protein localization"/>
    <property type="evidence" value="ECO:0000315"/>
    <property type="project" value="UniProtKB"/>
</dbReference>
<dbReference type="GO" id="GO:0040017">
    <property type="term" value="P:positive regulation of locomotion"/>
    <property type="evidence" value="ECO:0000315"/>
    <property type="project" value="UniProtKB"/>
</dbReference>
<dbReference type="GO" id="GO:1904901">
    <property type="term" value="P:positive regulation of myosin II filament organization"/>
    <property type="evidence" value="ECO:0000315"/>
    <property type="project" value="UniProtKB"/>
</dbReference>
<dbReference type="GO" id="GO:1903829">
    <property type="term" value="P:positive regulation of protein localization"/>
    <property type="evidence" value="ECO:0000315"/>
    <property type="project" value="UniProtKB"/>
</dbReference>
<dbReference type="GO" id="GO:0060298">
    <property type="term" value="P:positive regulation of sarcomere organization"/>
    <property type="evidence" value="ECO:0000315"/>
    <property type="project" value="UniProtKB"/>
</dbReference>
<dbReference type="GO" id="GO:0032956">
    <property type="term" value="P:regulation of actin cytoskeleton organization"/>
    <property type="evidence" value="ECO:0000315"/>
    <property type="project" value="UniProtKB"/>
</dbReference>
<dbReference type="GO" id="GO:0055002">
    <property type="term" value="P:striated muscle cell development"/>
    <property type="evidence" value="ECO:0000315"/>
    <property type="project" value="UniProtKB"/>
</dbReference>
<dbReference type="GO" id="GO:0034446">
    <property type="term" value="P:substrate adhesion-dependent cell spreading"/>
    <property type="evidence" value="ECO:0000318"/>
    <property type="project" value="GO_Central"/>
</dbReference>
<dbReference type="CDD" id="cd14057">
    <property type="entry name" value="PK_ILK"/>
    <property type="match status" value="1"/>
</dbReference>
<dbReference type="FunFam" id="3.30.200.20:FF:000245">
    <property type="entry name" value="Integrin-linked protein kinase"/>
    <property type="match status" value="1"/>
</dbReference>
<dbReference type="FunFam" id="1.10.510.10:FF:000187">
    <property type="entry name" value="integrin-linked protein kinase"/>
    <property type="match status" value="1"/>
</dbReference>
<dbReference type="FunFam" id="1.25.40.20:FF:000050">
    <property type="entry name" value="integrin-linked protein kinase"/>
    <property type="match status" value="1"/>
</dbReference>
<dbReference type="Gene3D" id="1.25.40.20">
    <property type="entry name" value="Ankyrin repeat-containing domain"/>
    <property type="match status" value="1"/>
</dbReference>
<dbReference type="Gene3D" id="3.30.200.20">
    <property type="entry name" value="Phosphorylase Kinase, domain 1"/>
    <property type="match status" value="1"/>
</dbReference>
<dbReference type="Gene3D" id="1.10.510.10">
    <property type="entry name" value="Transferase(Phosphotransferase) domain 1"/>
    <property type="match status" value="1"/>
</dbReference>
<dbReference type="InterPro" id="IPR002110">
    <property type="entry name" value="Ankyrin_rpt"/>
</dbReference>
<dbReference type="InterPro" id="IPR036770">
    <property type="entry name" value="Ankyrin_rpt-contain_sf"/>
</dbReference>
<dbReference type="InterPro" id="IPR011009">
    <property type="entry name" value="Kinase-like_dom_sf"/>
</dbReference>
<dbReference type="InterPro" id="IPR035692">
    <property type="entry name" value="PK_ILK"/>
</dbReference>
<dbReference type="InterPro" id="IPR000719">
    <property type="entry name" value="Prot_kinase_dom"/>
</dbReference>
<dbReference type="InterPro" id="IPR001245">
    <property type="entry name" value="Ser-Thr/Tyr_kinase_cat_dom"/>
</dbReference>
<dbReference type="InterPro" id="IPR051681">
    <property type="entry name" value="Ser/Thr_Kinases-Pseudokinases"/>
</dbReference>
<dbReference type="PANTHER" id="PTHR44329:SF57">
    <property type="entry name" value="INTEGRIN-LINKED PROTEIN KINASE"/>
    <property type="match status" value="1"/>
</dbReference>
<dbReference type="PANTHER" id="PTHR44329">
    <property type="entry name" value="SERINE/THREONINE-PROTEIN KINASE TNNI3K-RELATED"/>
    <property type="match status" value="1"/>
</dbReference>
<dbReference type="Pfam" id="PF00023">
    <property type="entry name" value="Ank"/>
    <property type="match status" value="1"/>
</dbReference>
<dbReference type="Pfam" id="PF12796">
    <property type="entry name" value="Ank_2"/>
    <property type="match status" value="1"/>
</dbReference>
<dbReference type="Pfam" id="PF07714">
    <property type="entry name" value="PK_Tyr_Ser-Thr"/>
    <property type="match status" value="1"/>
</dbReference>
<dbReference type="PIRSF" id="PIRSF000654">
    <property type="entry name" value="Integrin-linked_kinase"/>
    <property type="match status" value="1"/>
</dbReference>
<dbReference type="SMART" id="SM00248">
    <property type="entry name" value="ANK"/>
    <property type="match status" value="3"/>
</dbReference>
<dbReference type="SUPFAM" id="SSF48403">
    <property type="entry name" value="Ankyrin repeat"/>
    <property type="match status" value="1"/>
</dbReference>
<dbReference type="SUPFAM" id="SSF56112">
    <property type="entry name" value="Protein kinase-like (PK-like)"/>
    <property type="match status" value="1"/>
</dbReference>
<dbReference type="PROSITE" id="PS50297">
    <property type="entry name" value="ANK_REP_REGION"/>
    <property type="match status" value="1"/>
</dbReference>
<dbReference type="PROSITE" id="PS50088">
    <property type="entry name" value="ANK_REPEAT"/>
    <property type="match status" value="3"/>
</dbReference>
<dbReference type="PROSITE" id="PS50011">
    <property type="entry name" value="PROTEIN_KINASE_DOM"/>
    <property type="match status" value="1"/>
</dbReference>
<name>ILKH_CAEEL</name>
<evidence type="ECO:0000255" key="1"/>
<evidence type="ECO:0000255" key="2">
    <source>
        <dbReference type="PROSITE-ProRule" id="PRU00159"/>
    </source>
</evidence>
<evidence type="ECO:0000269" key="3">
    <source>
    </source>
</evidence>
<evidence type="ECO:0000269" key="4">
    <source>
    </source>
</evidence>
<evidence type="ECO:0000269" key="5">
    <source>
    </source>
</evidence>
<evidence type="ECO:0000269" key="6">
    <source>
    </source>
</evidence>
<evidence type="ECO:0000269" key="7">
    <source>
    </source>
</evidence>
<evidence type="ECO:0000269" key="8">
    <source>
    </source>
</evidence>
<evidence type="ECO:0000269" key="9">
    <source>
    </source>
</evidence>
<evidence type="ECO:0000269" key="10">
    <source>
    </source>
</evidence>
<evidence type="ECO:0000269" key="11">
    <source>
    </source>
</evidence>
<evidence type="ECO:0000269" key="12">
    <source>
    </source>
</evidence>
<evidence type="ECO:0000303" key="13">
    <source>
    </source>
</evidence>
<evidence type="ECO:0000303" key="14">
    <source>
    </source>
</evidence>
<evidence type="ECO:0000305" key="15"/>
<evidence type="ECO:0000305" key="16">
    <source>
    </source>
</evidence>
<evidence type="ECO:0000312" key="17">
    <source>
        <dbReference type="EMBL" id="CAB77052.1"/>
    </source>
</evidence>
<evidence type="ECO:0000312" key="18">
    <source>
        <dbReference type="Proteomes" id="UP000001940"/>
    </source>
</evidence>
<evidence type="ECO:0000312" key="19">
    <source>
        <dbReference type="WormBase" id="C29F9.7"/>
    </source>
</evidence>
<protein>
    <recommendedName>
        <fullName evidence="14">Integrin-linked protein kinase homolog pat-4</fullName>
        <shortName evidence="13">ILK homolog</shortName>
    </recommendedName>
    <alternativeName>
        <fullName evidence="13">Paralyzed and arrested elongation at two-fold protein 4</fullName>
    </alternativeName>
</protein>
<organism evidence="18">
    <name type="scientific">Caenorhabditis elegans</name>
    <dbReference type="NCBI Taxonomy" id="6239"/>
    <lineage>
        <taxon>Eukaryota</taxon>
        <taxon>Metazoa</taxon>
        <taxon>Ecdysozoa</taxon>
        <taxon>Nematoda</taxon>
        <taxon>Chromadorea</taxon>
        <taxon>Rhabditida</taxon>
        <taxon>Rhabditina</taxon>
        <taxon>Rhabditomorpha</taxon>
        <taxon>Rhabditoidea</taxon>
        <taxon>Rhabditidae</taxon>
        <taxon>Peloderinae</taxon>
        <taxon>Caenorhabditis</taxon>
    </lineage>
</organism>
<feature type="chain" id="PRO_0000434505" description="Integrin-linked protein kinase homolog pat-4" evidence="15">
    <location>
        <begin position="1"/>
        <end position="466"/>
    </location>
</feature>
<feature type="repeat" description="ANK 1" evidence="1">
    <location>
        <begin position="50"/>
        <end position="79"/>
    </location>
</feature>
<feature type="repeat" description="ANK 2" evidence="1">
    <location>
        <begin position="83"/>
        <end position="112"/>
    </location>
</feature>
<feature type="repeat" description="ANK 3" evidence="1">
    <location>
        <begin position="116"/>
        <end position="145"/>
    </location>
</feature>
<feature type="domain" description="Protein kinase" evidence="2">
    <location>
        <begin position="210"/>
        <end position="465"/>
    </location>
</feature>
<feature type="mutagenesis site" description="Restores the interaction with unc-112 when mutated at 'Asp-382' and the localization of mutated unc-112 to integrin adhesion sites in body wall muscles." evidence="12">
    <original>P</original>
    <variation>L</variation>
    <location>
        <position position="257"/>
    </location>
</feature>
<feature type="mutagenesis site" description="No effect on the interaction with unc-112 or pat-6." evidence="3 4">
    <original>E</original>
    <variation>K</variation>
    <location>
        <position position="374"/>
    </location>
</feature>
<gene>
    <name evidence="19" type="primary">pat-4</name>
    <name evidence="19" type="ORF">C29F9.7</name>
</gene>
<reference evidence="18" key="1">
    <citation type="journal article" date="1998" name="Science">
        <title>Genome sequence of the nematode C. elegans: a platform for investigating biology.</title>
        <authorList>
            <consortium name="The C. elegans sequencing consortium"/>
        </authorList>
    </citation>
    <scope>NUCLEOTIDE SEQUENCE [LARGE SCALE GENOMIC DNA]</scope>
    <source>
        <strain evidence="18">Bristol N2</strain>
    </source>
</reference>
<reference evidence="17" key="2">
    <citation type="journal article" date="1999" name="Oncogene">
        <title>Integrin-linked kinase regulates phosphorylation of serine 473 of protein kinase B by an indirect mechanism.</title>
        <authorList>
            <person name="Lynch D.K."/>
            <person name="Ellis C.A."/>
            <person name="Edwards P.A."/>
            <person name="Hiles I.D."/>
        </authorList>
    </citation>
    <scope>NUCLEOTIDE SEQUENCE [MRNA] OF 18-466</scope>
</reference>
<reference evidence="15" key="3">
    <citation type="journal article" date="2002" name="Curr. Biol.">
        <title>C. elegans PAT-4/ILK functions as an adaptor protein within integrin adhesion complexes.</title>
        <authorList>
            <person name="Mackinnon A.C."/>
            <person name="Qadota H."/>
            <person name="Norman K.R."/>
            <person name="Moerman D.G."/>
            <person name="Williams B.D."/>
        </authorList>
    </citation>
    <scope>FUNCTION</scope>
    <scope>INTERACTION WITH UNC-112 AND UNC-97</scope>
    <scope>SUBCELLULAR LOCATION</scope>
    <scope>TISSUE SPECIFICITY</scope>
    <scope>DEVELOPMENTAL STAGE</scope>
    <scope>DISRUPTION PHENOTYPE</scope>
    <scope>MUTAGENESIS OF GLU-374</scope>
</reference>
<reference evidence="15" key="4">
    <citation type="journal article" date="2003" name="Curr. Biol.">
        <title>C. elegans PAT-6/actopaxin plays a critical role in the assembly of integrin adhesion complexes in vivo.</title>
        <authorList>
            <person name="Lin X."/>
            <person name="Qadota H."/>
            <person name="Moerman D.G."/>
            <person name="Williams B.D."/>
        </authorList>
    </citation>
    <scope>INTERACTION WITH PAT-6</scope>
    <scope>SUBCELLULAR LOCATION</scope>
    <scope>MUTAGENESIS OF GLU-374</scope>
</reference>
<reference key="5">
    <citation type="journal article" date="2006" name="Development">
        <title>FGF negatively regulates muscle membrane extension in Caenorhabditis elegans.</title>
        <authorList>
            <person name="Dixon S.J."/>
            <person name="Alexander M."/>
            <person name="Fernandes R."/>
            <person name="Ricker N."/>
            <person name="Roy P.J."/>
        </authorList>
    </citation>
    <scope>FUNCTION</scope>
    <scope>DISRUPTION PHENOTYPE</scope>
</reference>
<reference key="6">
    <citation type="journal article" date="2006" name="Exp. Cell Res.">
        <title>pat-4/ILK and unc-112/Mig-2 are required for gonad function in Caenorhabditis elegans.</title>
        <authorList>
            <person name="Xu X."/>
            <person name="Rongali S.C."/>
            <person name="Miles J.P."/>
            <person name="Lee K.D."/>
            <person name="Lee M."/>
        </authorList>
    </citation>
    <scope>FUNCTION</scope>
    <scope>DISRUPTION PHENOTYPE</scope>
</reference>
<reference key="7">
    <citation type="journal article" date="2007" name="Dev. Biol.">
        <title>UNC-97/PINCH is involved in the assembly of integrin cell adhesion complexes in Caenorhabditis elegans body wall muscle.</title>
        <authorList>
            <person name="Norman K.R."/>
            <person name="Cordes S."/>
            <person name="Qadota H."/>
            <person name="Rahmani P."/>
            <person name="Moerman D.G."/>
        </authorList>
    </citation>
    <scope>INTERACTION WITH UNC-97</scope>
    <scope>SUBCELLULAR LOCATION</scope>
</reference>
<reference key="8">
    <citation type="journal article" date="2012" name="J. Biol. Chem.">
        <title>A molecular mechanism for the requirement of PAT-4 (integrin-linked kinase (ILK)) for the localization of UNC-112 (Kindlin) to integrin adhesion sites.</title>
        <authorList>
            <person name="Qadota H."/>
            <person name="Moerman D.G."/>
            <person name="Benian G.M."/>
        </authorList>
    </citation>
    <scope>DISRUPTION PHENOTYPE</scope>
</reference>
<reference key="9">
    <citation type="journal article" date="2012" name="PLoS Genet.">
        <title>Calpains mediate integrin attachment complex maintenance of adult muscle in Caenorhabditis elegans.</title>
        <authorList>
            <person name="Etheridge T."/>
            <person name="Oczypok E.A."/>
            <person name="Lehmann S."/>
            <person name="Fields B.D."/>
            <person name="Shephard F."/>
            <person name="Jacobson L.A."/>
            <person name="Szewczyk N.J."/>
        </authorList>
    </citation>
    <scope>FUNCTION</scope>
    <scope>COMPONENT OF AN INTEGRIN CONTAINING ATTACHMENT COMPLEX</scope>
    <scope>DISRUPTION PHENOTYPE</scope>
</reference>
<reference key="10">
    <citation type="journal article" date="2013" name="Mol. Biol. Cell">
        <title>CPNA-1, a copine domain protein, is located at integrin adhesion sites and is required for myofilament stability in Caenorhabditis elegans.</title>
        <authorList>
            <person name="Warner A."/>
            <person name="Xiong G."/>
            <person name="Qadota H."/>
            <person name="Rogalski T."/>
            <person name="Vogl A.W."/>
            <person name="Moerman D.G."/>
            <person name="Benian G.M."/>
        </authorList>
    </citation>
    <scope>FUNCTION</scope>
    <scope>SUBCELLULAR LOCATION</scope>
    <scope>TISSUE SPECIFICITY</scope>
    <scope>DEVELOPMENTAL STAGE</scope>
</reference>
<reference key="11">
    <citation type="journal article" date="2014" name="Aging Cell">
        <title>Integrin-linked kinase modulates longevity and thermotolerance in C. elegans through neuronal control of HSF-1.</title>
        <authorList>
            <person name="Kumsta C."/>
            <person name="Ching T.T."/>
            <person name="Nishimura M."/>
            <person name="Davis A.E."/>
            <person name="Gelino S."/>
            <person name="Catan H.H."/>
            <person name="Yu X."/>
            <person name="Chu C.C."/>
            <person name="Ong B."/>
            <person name="Panowski S.H."/>
            <person name="Baird N."/>
            <person name="Bodmer R."/>
            <person name="Hsu A.L."/>
            <person name="Hansen M."/>
        </authorList>
    </citation>
    <scope>FUNCTION</scope>
    <scope>DISRUPTION PHENOTYPE</scope>
</reference>
<reference key="12">
    <citation type="journal article" date="2014" name="J. Biol. Chem.">
        <title>Suppressor mutations suggest a surface on PAT-4 (Integrin-linked Kinase) that interacts with UNC-112 (Kindlin).</title>
        <authorList>
            <person name="Qadota H."/>
            <person name="Luo Y."/>
            <person name="Matsunaga Y."/>
            <person name="Park A.S."/>
            <person name="Gernert K.M."/>
            <person name="Benian G.M."/>
        </authorList>
    </citation>
    <scope>INTERACTION WITH UNC-112</scope>
    <scope>MUTAGENESIS OF PRO-257</scope>
</reference>